<gene>
    <name type="primary">BEM2</name>
    <name type="ordered locus">AGR144C</name>
</gene>
<protein>
    <recommendedName>
        <fullName>GTPase-activating protein BEM2</fullName>
    </recommendedName>
</protein>
<accession>Q9HF75</accession>
<keyword id="KW-0343">GTPase activation</keyword>
<keyword id="KW-1185">Reference proteome</keyword>
<organism>
    <name type="scientific">Eremothecium gossypii (strain ATCC 10895 / CBS 109.51 / FGSC 9923 / NRRL Y-1056)</name>
    <name type="common">Yeast</name>
    <name type="synonym">Ashbya gossypii</name>
    <dbReference type="NCBI Taxonomy" id="284811"/>
    <lineage>
        <taxon>Eukaryota</taxon>
        <taxon>Fungi</taxon>
        <taxon>Dikarya</taxon>
        <taxon>Ascomycota</taxon>
        <taxon>Saccharomycotina</taxon>
        <taxon>Saccharomycetes</taxon>
        <taxon>Saccharomycetales</taxon>
        <taxon>Saccharomycetaceae</taxon>
        <taxon>Eremothecium</taxon>
    </lineage>
</organism>
<comment type="function">
    <text evidence="5">GTPase-activating protein (GAP) for RHO proteins. Required for polarized growth and maintenance of cell polarity.</text>
</comment>
<dbReference type="EMBL" id="AF195007">
    <property type="protein sequence ID" value="AAG43463.1"/>
    <property type="molecule type" value="Genomic_DNA"/>
</dbReference>
<dbReference type="EMBL" id="AE016820">
    <property type="protein sequence ID" value="AAS54634.1"/>
    <property type="molecule type" value="Genomic_DNA"/>
</dbReference>
<dbReference type="RefSeq" id="NP_986810.1">
    <property type="nucleotide sequence ID" value="NM_211872.1"/>
</dbReference>
<dbReference type="SMR" id="Q9HF75"/>
<dbReference type="FunCoup" id="Q9HF75">
    <property type="interactions" value="681"/>
</dbReference>
<dbReference type="STRING" id="284811.Q9HF75"/>
<dbReference type="EnsemblFungi" id="AAS54634">
    <property type="protein sequence ID" value="AAS54634"/>
    <property type="gene ID" value="AGOS_AGR144C"/>
</dbReference>
<dbReference type="GeneID" id="4623112"/>
<dbReference type="KEGG" id="ago:AGOS_AGR144C"/>
<dbReference type="eggNOG" id="KOG1450">
    <property type="taxonomic scope" value="Eukaryota"/>
</dbReference>
<dbReference type="HOGENOM" id="CLU_002085_0_0_1"/>
<dbReference type="InParanoid" id="Q9HF75"/>
<dbReference type="OMA" id="TLEDDRW"/>
<dbReference type="OrthoDB" id="79452at2759"/>
<dbReference type="Proteomes" id="UP000000591">
    <property type="component" value="Chromosome VII"/>
</dbReference>
<dbReference type="GO" id="GO:0005938">
    <property type="term" value="C:cell cortex"/>
    <property type="evidence" value="ECO:0000318"/>
    <property type="project" value="GO_Central"/>
</dbReference>
<dbReference type="GO" id="GO:0032153">
    <property type="term" value="C:cell division site"/>
    <property type="evidence" value="ECO:0000318"/>
    <property type="project" value="GO_Central"/>
</dbReference>
<dbReference type="GO" id="GO:0051286">
    <property type="term" value="C:cell tip"/>
    <property type="evidence" value="ECO:0000318"/>
    <property type="project" value="GO_Central"/>
</dbReference>
<dbReference type="GO" id="GO:0005934">
    <property type="term" value="C:cellular bud tip"/>
    <property type="evidence" value="ECO:0007669"/>
    <property type="project" value="EnsemblFungi"/>
</dbReference>
<dbReference type="GO" id="GO:0000131">
    <property type="term" value="C:incipient cellular bud site"/>
    <property type="evidence" value="ECO:0007669"/>
    <property type="project" value="EnsemblFungi"/>
</dbReference>
<dbReference type="GO" id="GO:0043332">
    <property type="term" value="C:mating projection tip"/>
    <property type="evidence" value="ECO:0007669"/>
    <property type="project" value="EnsemblFungi"/>
</dbReference>
<dbReference type="GO" id="GO:0005886">
    <property type="term" value="C:plasma membrane"/>
    <property type="evidence" value="ECO:0000318"/>
    <property type="project" value="GO_Central"/>
</dbReference>
<dbReference type="GO" id="GO:0030427">
    <property type="term" value="C:site of polarized growth"/>
    <property type="evidence" value="ECO:0000318"/>
    <property type="project" value="GO_Central"/>
</dbReference>
<dbReference type="GO" id="GO:0005096">
    <property type="term" value="F:GTPase activator activity"/>
    <property type="evidence" value="ECO:0000318"/>
    <property type="project" value="GO_Central"/>
</dbReference>
<dbReference type="GO" id="GO:0005085">
    <property type="term" value="F:guanyl-nucleotide exchange factor activity"/>
    <property type="evidence" value="ECO:0007669"/>
    <property type="project" value="InterPro"/>
</dbReference>
<dbReference type="GO" id="GO:0030036">
    <property type="term" value="P:actin cytoskeleton organization"/>
    <property type="evidence" value="ECO:0007669"/>
    <property type="project" value="EnsemblFungi"/>
</dbReference>
<dbReference type="GO" id="GO:0044879">
    <property type="term" value="P:mitotic morphogenesis checkpoint signaling"/>
    <property type="evidence" value="ECO:0007669"/>
    <property type="project" value="EnsemblFungi"/>
</dbReference>
<dbReference type="GO" id="GO:0035024">
    <property type="term" value="P:negative regulation of Rho protein signal transduction"/>
    <property type="evidence" value="ECO:0007669"/>
    <property type="project" value="EnsemblFungi"/>
</dbReference>
<dbReference type="GO" id="GO:0007264">
    <property type="term" value="P:small GTPase-mediated signal transduction"/>
    <property type="evidence" value="ECO:0000318"/>
    <property type="project" value="GO_Central"/>
</dbReference>
<dbReference type="CDD" id="cd00821">
    <property type="entry name" value="PH"/>
    <property type="match status" value="1"/>
</dbReference>
<dbReference type="CDD" id="cd06224">
    <property type="entry name" value="REM"/>
    <property type="match status" value="1"/>
</dbReference>
<dbReference type="CDD" id="cd00159">
    <property type="entry name" value="RhoGAP"/>
    <property type="match status" value="1"/>
</dbReference>
<dbReference type="FunFam" id="1.20.870.10:FF:000022">
    <property type="entry name" value="Rho GTPase-activating protein"/>
    <property type="match status" value="1"/>
</dbReference>
<dbReference type="Gene3D" id="2.30.29.30">
    <property type="entry name" value="Pleckstrin-homology domain (PH domain)/Phosphotyrosine-binding domain (PTB)"/>
    <property type="match status" value="1"/>
</dbReference>
<dbReference type="Gene3D" id="1.10.840.10">
    <property type="entry name" value="Ras guanine-nucleotide exchange factors catalytic domain"/>
    <property type="match status" value="1"/>
</dbReference>
<dbReference type="Gene3D" id="1.10.555.10">
    <property type="entry name" value="Rho GTPase activation protein"/>
    <property type="match status" value="1"/>
</dbReference>
<dbReference type="Gene3D" id="1.20.870.10">
    <property type="entry name" value="Son of sevenless (SoS) protein Chain: S domain 1"/>
    <property type="match status" value="1"/>
</dbReference>
<dbReference type="InterPro" id="IPR011993">
    <property type="entry name" value="PH-like_dom_sf"/>
</dbReference>
<dbReference type="InterPro" id="IPR001849">
    <property type="entry name" value="PH_domain"/>
</dbReference>
<dbReference type="InterPro" id="IPR000651">
    <property type="entry name" value="Ras-like_Gua-exchang_fac_N"/>
</dbReference>
<dbReference type="InterPro" id="IPR023578">
    <property type="entry name" value="Ras_GEF_dom_sf"/>
</dbReference>
<dbReference type="InterPro" id="IPR001895">
    <property type="entry name" value="RASGEF_cat_dom"/>
</dbReference>
<dbReference type="InterPro" id="IPR036964">
    <property type="entry name" value="RASGEF_cat_dom_sf"/>
</dbReference>
<dbReference type="InterPro" id="IPR050729">
    <property type="entry name" value="Rho-GAP"/>
</dbReference>
<dbReference type="InterPro" id="IPR008936">
    <property type="entry name" value="Rho_GTPase_activation_prot"/>
</dbReference>
<dbReference type="InterPro" id="IPR000198">
    <property type="entry name" value="RhoGAP_dom"/>
</dbReference>
<dbReference type="PANTHER" id="PTHR23176:SF96">
    <property type="entry name" value="GTPASE-ACTIVATING PROTEIN BEM2_IPL2"/>
    <property type="match status" value="1"/>
</dbReference>
<dbReference type="PANTHER" id="PTHR23176">
    <property type="entry name" value="RHO/RAC/CDC GTPASE-ACTIVATING PROTEIN"/>
    <property type="match status" value="1"/>
</dbReference>
<dbReference type="Pfam" id="PF00617">
    <property type="entry name" value="RasGEF"/>
    <property type="match status" value="1"/>
</dbReference>
<dbReference type="Pfam" id="PF00618">
    <property type="entry name" value="RasGEF_N"/>
    <property type="match status" value="1"/>
</dbReference>
<dbReference type="Pfam" id="PF00620">
    <property type="entry name" value="RhoGAP"/>
    <property type="match status" value="1"/>
</dbReference>
<dbReference type="SMART" id="SM00233">
    <property type="entry name" value="PH"/>
    <property type="match status" value="1"/>
</dbReference>
<dbReference type="SMART" id="SM00147">
    <property type="entry name" value="RasGEF"/>
    <property type="match status" value="1"/>
</dbReference>
<dbReference type="SMART" id="SM00229">
    <property type="entry name" value="RasGEFN"/>
    <property type="match status" value="1"/>
</dbReference>
<dbReference type="SMART" id="SM00324">
    <property type="entry name" value="RhoGAP"/>
    <property type="match status" value="1"/>
</dbReference>
<dbReference type="SUPFAM" id="SSF48350">
    <property type="entry name" value="GTPase activation domain, GAP"/>
    <property type="match status" value="1"/>
</dbReference>
<dbReference type="SUPFAM" id="SSF50729">
    <property type="entry name" value="PH domain-like"/>
    <property type="match status" value="1"/>
</dbReference>
<dbReference type="SUPFAM" id="SSF48366">
    <property type="entry name" value="Ras GEF"/>
    <property type="match status" value="2"/>
</dbReference>
<dbReference type="PROSITE" id="PS50003">
    <property type="entry name" value="PH_DOMAIN"/>
    <property type="match status" value="1"/>
</dbReference>
<dbReference type="PROSITE" id="PS50009">
    <property type="entry name" value="RASGEF_CAT"/>
    <property type="match status" value="1"/>
</dbReference>
<dbReference type="PROSITE" id="PS50238">
    <property type="entry name" value="RHOGAP"/>
    <property type="match status" value="1"/>
</dbReference>
<feature type="chain" id="PRO_0000068857" description="GTPase-activating protein BEM2">
    <location>
        <begin position="1"/>
        <end position="2071"/>
    </location>
</feature>
<feature type="domain" description="Ras-GEF" evidence="2">
    <location>
        <begin position="471"/>
        <end position="738"/>
    </location>
</feature>
<feature type="domain" description="PH" evidence="1">
    <location>
        <begin position="1751"/>
        <end position="1853"/>
    </location>
</feature>
<feature type="domain" description="Rho-GAP" evidence="3">
    <location>
        <begin position="1872"/>
        <end position="2070"/>
    </location>
</feature>
<feature type="region of interest" description="Disordered" evidence="4">
    <location>
        <begin position="1"/>
        <end position="115"/>
    </location>
</feature>
<feature type="region of interest" description="Disordered" evidence="4">
    <location>
        <begin position="171"/>
        <end position="195"/>
    </location>
</feature>
<feature type="region of interest" description="Disordered" evidence="4">
    <location>
        <begin position="787"/>
        <end position="819"/>
    </location>
</feature>
<feature type="region of interest" description="Disordered" evidence="4">
    <location>
        <begin position="1645"/>
        <end position="1676"/>
    </location>
</feature>
<feature type="region of interest" description="Disordered" evidence="4">
    <location>
        <begin position="1702"/>
        <end position="1738"/>
    </location>
</feature>
<feature type="compositionally biased region" description="Low complexity" evidence="4">
    <location>
        <begin position="16"/>
        <end position="31"/>
    </location>
</feature>
<feature type="compositionally biased region" description="Low complexity" evidence="4">
    <location>
        <begin position="42"/>
        <end position="55"/>
    </location>
</feature>
<feature type="compositionally biased region" description="Polar residues" evidence="4">
    <location>
        <begin position="62"/>
        <end position="80"/>
    </location>
</feature>
<feature type="compositionally biased region" description="Low complexity" evidence="4">
    <location>
        <begin position="81"/>
        <end position="110"/>
    </location>
</feature>
<feature type="compositionally biased region" description="Polar residues" evidence="4">
    <location>
        <begin position="181"/>
        <end position="191"/>
    </location>
</feature>
<feature type="compositionally biased region" description="Polar residues" evidence="4">
    <location>
        <begin position="787"/>
        <end position="811"/>
    </location>
</feature>
<feature type="compositionally biased region" description="Low complexity" evidence="4">
    <location>
        <begin position="1656"/>
        <end position="1676"/>
    </location>
</feature>
<feature type="compositionally biased region" description="Low complexity" evidence="4">
    <location>
        <begin position="1702"/>
        <end position="1726"/>
    </location>
</feature>
<feature type="site" description="Arginine finger; crucial for GTP hydrolysis by stabilizing the transition state" evidence="3">
    <location>
        <position position="1908"/>
    </location>
</feature>
<sequence>MPLKWAARNKKPPSAPQSCASKPSSASQSSCVDERISATPRSSISSNSSPNSKNNMSRHSHSNGSVYSDETTLKTAQTHYTQQGQQAKPQQHTQQQQQQPQTPMQLQVPTGQAHKRTLTCEDMKAGARCEEQVSPCSQPAGSPVRRGGGLNGETYDGTVFRLGWVNKAQGAAPAREGRYSHQPTASLSSIGSERPHFTGGGTSGYQYVATAYRLHRAQLKGCILNLYKSGLTNVKYFDPALEPSAAALQMHQERQEMPLLQPPLPSEAVPAPSILEASMESGELRLEYLSEAYPHPDLQLDKKDGKILSGSLESLCHAVLFMPTTDAKRVTDILLLLPLLDDFTRVLNYFNLFGKVFSKHHPAGAAGADDLNQNYNISNETDRQLTLRLATVVQTVLDMFPGFLLDDKIFQSLVILLDTISFHDEDTSQELKVAIAEKQTVLVKLTGFANEPIQSAKLDVLIKVQSFLKLDTEKVANQIHKINLTFNRVWSPQADYSLLYDSQYTQKHVELNPLVFFNDKNVQYLSRLMVSHIFCEETGFTPKKRAEVLTKWVQLGCKFERLGDMVSWLAIATVICSIPVLRLTRTWQYVPDSYLKIIFKDWVPTIVQLDRRQMSSKSMNSVFILAPPNLNDAFVRDNVIPYFGDLVIHSDDLPRDSKYKYLEKKIRRTKNAFYKWQQRLDQAFAQDRDSASSFTDSLHLDEEEHDVADFYQYWRFHMNLPPMNIETIMEMSLKMEPPSINQQTYSKTYSTRSALISGAYLPTLFTTLLPSYSLFPQELLIAAASTPSTKNNNSSQASNRISQLSVNSTPHSNASSSSAASAVTGIDNIDVPITKEISSKLSNKQVLLKFIRDMFNVDINVFHISDDVIFKSIRDYEAKSRPTSVVIESPKRLSLLSSVSPDVSAVSSALENLDLFKNFNSSSDDIAEFTVQVVLKCASLEKIFDILVLTSRVFSNLVTTTDLVSYFNSEKARREKSGAQHNGQHSIGLLDFALISLIMDNELFAETFFNNYKSFTTTLCVLENLAKRFIGAKSSAISISLINKLRNSESSRQIPPSTTSNQFSASGIFKPSYDELKFPVWDLKVTSVEGCPLDYLAKIQIGVLESLYHLIREHYADFTDDLANNKTFLDILKIINQEVYDEWDKRLDDLRNNNNSSQKRKNSCDDNSSAKITFHVNDARPENSNENKRGAATNLGDSSLAALEKLQCTLQDLYVKIKSSYQRQLYRPLGVTRNCRKVHDMLCQFQPQTSMSALIMNGSSDTLDKMVTEFQALKHTDYDDIINWIYKLDHFITSKLKLVSNQDWIQVSQILESLSNDSLVALFNYPLHAESNNVIASGSSQLDDLQILDIFTWLSTLESGSAHIIDKFPASVQLIVRLHLSLTKFFTVHIAHLHSTYEARVNTCSLILEILNFVHVKNANVNLFHSDDAGEGSMATISPHVPSFIETAIENAIISPESRFFEVSWKQAYKTISEKDEKLTFIGSVLTGLDKSTAHFLDADNRQPVRPKNFSPCPGWFISRLLEITGLVPNMSIENSKMINFDKRRFINNIVINYQDLIPNTEQLPSHDDEKSAHQFGSILFHYGTESSIKAFRKASKEAASNEARKLKFQAMGLFNDILVTEVYKVQRDQKKQEQLTVQEHEAKRSVLIQHPNKVSVSSASSSVSGSSSGSTARTSNPAHAAYALNMAGSLSISAARHGRSSVSSRSSVISNTATATSPASGASPNQTSTSHHGGMGKKIGGFLRRPFSISGFTSSSSQYTTTSVVLSGVQANGSISPYELPELTSEIQDTKIVTVIKTFEIKSCIQINNYRQDPDMMHCFKIVMEDGTQHTLQCMDDADMHEWMKAITLSKRYSFHSKRFKGKTSNKIFGVPVEDVCEREGALIPNIIVKLLDEIELRGLDEVGLYRVPGSVGSINALKNAFDDEGAVHNTFTLEDDRWFEINTIAGCFKLYLRELPESLFTNEKVDEFVNIMTAYKNHEVDLSQFQNGIKTLLSTLPVFNYHILKRLFLHLNRVHQHVENNRMDASNLAIVFSMSFINQDDLASTMGPTLGLLQMLLQHLIRNPEHYFT</sequence>
<reference key="1">
    <citation type="journal article" date="2000" name="J. Cell Sci.">
        <title>Determination of cell polarity in germinated spores and hyphal tips of the filamentous ascomycete Ashbya gossypii requires a rhoGAP homolog.</title>
        <authorList>
            <person name="Wendland J."/>
            <person name="Philippsen P."/>
        </authorList>
    </citation>
    <scope>NUCLEOTIDE SEQUENCE [GENOMIC DNA]</scope>
    <scope>FUNCTION</scope>
</reference>
<reference key="2">
    <citation type="journal article" date="2004" name="Science">
        <title>The Ashbya gossypii genome as a tool for mapping the ancient Saccharomyces cerevisiae genome.</title>
        <authorList>
            <person name="Dietrich F.S."/>
            <person name="Voegeli S."/>
            <person name="Brachat S."/>
            <person name="Lerch A."/>
            <person name="Gates K."/>
            <person name="Steiner S."/>
            <person name="Mohr C."/>
            <person name="Poehlmann R."/>
            <person name="Luedi P."/>
            <person name="Choi S."/>
            <person name="Wing R.A."/>
            <person name="Flavier A."/>
            <person name="Gaffney T.D."/>
            <person name="Philippsen P."/>
        </authorList>
    </citation>
    <scope>NUCLEOTIDE SEQUENCE [LARGE SCALE GENOMIC DNA]</scope>
    <source>
        <strain>ATCC 10895 / CBS 109.51 / FGSC 9923 / NRRL Y-1056</strain>
    </source>
</reference>
<reference key="3">
    <citation type="journal article" date="2013" name="G3 (Bethesda)">
        <title>Genomes of Ashbya fungi isolated from insects reveal four mating-type loci, numerous translocations, lack of transposons, and distinct gene duplications.</title>
        <authorList>
            <person name="Dietrich F.S."/>
            <person name="Voegeli S."/>
            <person name="Kuo S."/>
            <person name="Philippsen P."/>
        </authorList>
    </citation>
    <scope>GENOME REANNOTATION</scope>
    <source>
        <strain>ATCC 10895 / CBS 109.51 / FGSC 9923 / NRRL Y-1056</strain>
    </source>
</reference>
<proteinExistence type="predicted"/>
<evidence type="ECO:0000255" key="1">
    <source>
        <dbReference type="PROSITE-ProRule" id="PRU00145"/>
    </source>
</evidence>
<evidence type="ECO:0000255" key="2">
    <source>
        <dbReference type="PROSITE-ProRule" id="PRU00168"/>
    </source>
</evidence>
<evidence type="ECO:0000255" key="3">
    <source>
        <dbReference type="PROSITE-ProRule" id="PRU00172"/>
    </source>
</evidence>
<evidence type="ECO:0000256" key="4">
    <source>
        <dbReference type="SAM" id="MobiDB-lite"/>
    </source>
</evidence>
<evidence type="ECO:0000269" key="5">
    <source>
    </source>
</evidence>
<name>BEM2_EREGS</name>